<gene>
    <name evidence="1" type="primary">ruvB</name>
    <name type="ordered locus">GSU1077</name>
</gene>
<sequence>MTTRTISPEKTDDDYVESSLRPRALEDYIGQEKAKGNLRVFIDAARKRGEALDHVLLYGPPGLGKTTLANIIACEMGVNIKSTSGPVIERPGDLAAILTNLEPHDVLFIDEIHRLSHVVEEILYPAMEDFQLDIIIGQGPSARTIKLDLPRFTLVGATTRAGLLSSPLRDRFGVISRLEFYTDAELSTIVTRSAHILDIQIEPDGARELARRSRGTPRIANRLLRRVRDFAQVRADGVISAQVVDESLKLLEIDEKGFDQMDRTIMLTIIDKFGGGPVGLDTIAAAIGEERDTIEDVYEPFLIQHGFINRTPRGRVATKSAYEHFGRIAPAPGQGALF</sequence>
<organism>
    <name type="scientific">Geobacter sulfurreducens (strain ATCC 51573 / DSM 12127 / PCA)</name>
    <dbReference type="NCBI Taxonomy" id="243231"/>
    <lineage>
        <taxon>Bacteria</taxon>
        <taxon>Pseudomonadati</taxon>
        <taxon>Thermodesulfobacteriota</taxon>
        <taxon>Desulfuromonadia</taxon>
        <taxon>Geobacterales</taxon>
        <taxon>Geobacteraceae</taxon>
        <taxon>Geobacter</taxon>
    </lineage>
</organism>
<proteinExistence type="inferred from homology"/>
<keyword id="KW-0067">ATP-binding</keyword>
<keyword id="KW-0963">Cytoplasm</keyword>
<keyword id="KW-0227">DNA damage</keyword>
<keyword id="KW-0233">DNA recombination</keyword>
<keyword id="KW-0234">DNA repair</keyword>
<keyword id="KW-0238">DNA-binding</keyword>
<keyword id="KW-0378">Hydrolase</keyword>
<keyword id="KW-0547">Nucleotide-binding</keyword>
<keyword id="KW-1185">Reference proteome</keyword>
<accession>P61532</accession>
<reference key="1">
    <citation type="journal article" date="2003" name="Science">
        <title>Genome of Geobacter sulfurreducens: metal reduction in subsurface environments.</title>
        <authorList>
            <person name="Methe B.A."/>
            <person name="Nelson K.E."/>
            <person name="Eisen J.A."/>
            <person name="Paulsen I.T."/>
            <person name="Nelson W.C."/>
            <person name="Heidelberg J.F."/>
            <person name="Wu D."/>
            <person name="Wu M."/>
            <person name="Ward N.L."/>
            <person name="Beanan M.J."/>
            <person name="Dodson R.J."/>
            <person name="Madupu R."/>
            <person name="Brinkac L.M."/>
            <person name="Daugherty S.C."/>
            <person name="DeBoy R.T."/>
            <person name="Durkin A.S."/>
            <person name="Gwinn M.L."/>
            <person name="Kolonay J.F."/>
            <person name="Sullivan S.A."/>
            <person name="Haft D.H."/>
            <person name="Selengut J."/>
            <person name="Davidsen T.M."/>
            <person name="Zafar N."/>
            <person name="White O."/>
            <person name="Tran B."/>
            <person name="Romero C."/>
            <person name="Forberger H.A."/>
            <person name="Weidman J.F."/>
            <person name="Khouri H.M."/>
            <person name="Feldblyum T.V."/>
            <person name="Utterback T.R."/>
            <person name="Van Aken S.E."/>
            <person name="Lovley D.R."/>
            <person name="Fraser C.M."/>
        </authorList>
    </citation>
    <scope>NUCLEOTIDE SEQUENCE [LARGE SCALE GENOMIC DNA]</scope>
    <source>
        <strain>ATCC 51573 / DSM 12127 / PCA</strain>
    </source>
</reference>
<dbReference type="EC" id="3.6.4.-" evidence="1"/>
<dbReference type="EMBL" id="AE017180">
    <property type="protein sequence ID" value="AAR34403.1"/>
    <property type="molecule type" value="Genomic_DNA"/>
</dbReference>
<dbReference type="RefSeq" id="NP_952130.1">
    <property type="nucleotide sequence ID" value="NC_002939.5"/>
</dbReference>
<dbReference type="RefSeq" id="WP_010941738.1">
    <property type="nucleotide sequence ID" value="NC_002939.5"/>
</dbReference>
<dbReference type="SMR" id="P61532"/>
<dbReference type="FunCoup" id="P61532">
    <property type="interactions" value="285"/>
</dbReference>
<dbReference type="STRING" id="243231.GSU1077"/>
<dbReference type="EnsemblBacteria" id="AAR34403">
    <property type="protein sequence ID" value="AAR34403"/>
    <property type="gene ID" value="GSU1077"/>
</dbReference>
<dbReference type="KEGG" id="gsu:GSU1077"/>
<dbReference type="PATRIC" id="fig|243231.5.peg.1075"/>
<dbReference type="eggNOG" id="COG2255">
    <property type="taxonomic scope" value="Bacteria"/>
</dbReference>
<dbReference type="HOGENOM" id="CLU_055599_1_0_7"/>
<dbReference type="InParanoid" id="P61532"/>
<dbReference type="OrthoDB" id="9804478at2"/>
<dbReference type="Proteomes" id="UP000000577">
    <property type="component" value="Chromosome"/>
</dbReference>
<dbReference type="GO" id="GO:0005737">
    <property type="term" value="C:cytoplasm"/>
    <property type="evidence" value="ECO:0007669"/>
    <property type="project" value="UniProtKB-SubCell"/>
</dbReference>
<dbReference type="GO" id="GO:0048476">
    <property type="term" value="C:Holliday junction resolvase complex"/>
    <property type="evidence" value="ECO:0007669"/>
    <property type="project" value="UniProtKB-UniRule"/>
</dbReference>
<dbReference type="GO" id="GO:0005524">
    <property type="term" value="F:ATP binding"/>
    <property type="evidence" value="ECO:0007669"/>
    <property type="project" value="UniProtKB-UniRule"/>
</dbReference>
<dbReference type="GO" id="GO:0016887">
    <property type="term" value="F:ATP hydrolysis activity"/>
    <property type="evidence" value="ECO:0007669"/>
    <property type="project" value="InterPro"/>
</dbReference>
<dbReference type="GO" id="GO:0000400">
    <property type="term" value="F:four-way junction DNA binding"/>
    <property type="evidence" value="ECO:0007669"/>
    <property type="project" value="UniProtKB-UniRule"/>
</dbReference>
<dbReference type="GO" id="GO:0009378">
    <property type="term" value="F:four-way junction helicase activity"/>
    <property type="evidence" value="ECO:0007669"/>
    <property type="project" value="InterPro"/>
</dbReference>
<dbReference type="GO" id="GO:0006310">
    <property type="term" value="P:DNA recombination"/>
    <property type="evidence" value="ECO:0007669"/>
    <property type="project" value="UniProtKB-UniRule"/>
</dbReference>
<dbReference type="GO" id="GO:0006281">
    <property type="term" value="P:DNA repair"/>
    <property type="evidence" value="ECO:0007669"/>
    <property type="project" value="UniProtKB-UniRule"/>
</dbReference>
<dbReference type="CDD" id="cd00009">
    <property type="entry name" value="AAA"/>
    <property type="match status" value="1"/>
</dbReference>
<dbReference type="FunFam" id="3.40.50.300:FF:000073">
    <property type="entry name" value="Holliday junction ATP-dependent DNA helicase RuvB"/>
    <property type="match status" value="1"/>
</dbReference>
<dbReference type="Gene3D" id="1.10.8.60">
    <property type="match status" value="1"/>
</dbReference>
<dbReference type="Gene3D" id="3.40.50.300">
    <property type="entry name" value="P-loop containing nucleotide triphosphate hydrolases"/>
    <property type="match status" value="1"/>
</dbReference>
<dbReference type="Gene3D" id="1.10.10.10">
    <property type="entry name" value="Winged helix-like DNA-binding domain superfamily/Winged helix DNA-binding domain"/>
    <property type="match status" value="1"/>
</dbReference>
<dbReference type="HAMAP" id="MF_00016">
    <property type="entry name" value="DNA_HJ_migration_RuvB"/>
    <property type="match status" value="1"/>
</dbReference>
<dbReference type="InterPro" id="IPR003593">
    <property type="entry name" value="AAA+_ATPase"/>
</dbReference>
<dbReference type="InterPro" id="IPR041445">
    <property type="entry name" value="AAA_lid_4"/>
</dbReference>
<dbReference type="InterPro" id="IPR004605">
    <property type="entry name" value="DNA_helicase_Holl-junc_RuvB"/>
</dbReference>
<dbReference type="InterPro" id="IPR027417">
    <property type="entry name" value="P-loop_NTPase"/>
</dbReference>
<dbReference type="InterPro" id="IPR008824">
    <property type="entry name" value="RuvB-like_N"/>
</dbReference>
<dbReference type="InterPro" id="IPR008823">
    <property type="entry name" value="RuvB_C"/>
</dbReference>
<dbReference type="InterPro" id="IPR036388">
    <property type="entry name" value="WH-like_DNA-bd_sf"/>
</dbReference>
<dbReference type="InterPro" id="IPR036390">
    <property type="entry name" value="WH_DNA-bd_sf"/>
</dbReference>
<dbReference type="NCBIfam" id="NF000868">
    <property type="entry name" value="PRK00080.1"/>
    <property type="match status" value="1"/>
</dbReference>
<dbReference type="NCBIfam" id="TIGR00635">
    <property type="entry name" value="ruvB"/>
    <property type="match status" value="1"/>
</dbReference>
<dbReference type="PANTHER" id="PTHR42848">
    <property type="match status" value="1"/>
</dbReference>
<dbReference type="PANTHER" id="PTHR42848:SF1">
    <property type="entry name" value="HOLLIDAY JUNCTION BRANCH MIGRATION COMPLEX SUBUNIT RUVB"/>
    <property type="match status" value="1"/>
</dbReference>
<dbReference type="Pfam" id="PF17864">
    <property type="entry name" value="AAA_lid_4"/>
    <property type="match status" value="1"/>
</dbReference>
<dbReference type="Pfam" id="PF05491">
    <property type="entry name" value="RuvB_C"/>
    <property type="match status" value="1"/>
</dbReference>
<dbReference type="Pfam" id="PF05496">
    <property type="entry name" value="RuvB_N"/>
    <property type="match status" value="1"/>
</dbReference>
<dbReference type="SMART" id="SM00382">
    <property type="entry name" value="AAA"/>
    <property type="match status" value="1"/>
</dbReference>
<dbReference type="SUPFAM" id="SSF52540">
    <property type="entry name" value="P-loop containing nucleoside triphosphate hydrolases"/>
    <property type="match status" value="1"/>
</dbReference>
<dbReference type="SUPFAM" id="SSF46785">
    <property type="entry name" value="Winged helix' DNA-binding domain"/>
    <property type="match status" value="1"/>
</dbReference>
<feature type="chain" id="PRO_0000165534" description="Holliday junction branch migration complex subunit RuvB">
    <location>
        <begin position="1"/>
        <end position="338"/>
    </location>
</feature>
<feature type="region of interest" description="Large ATPase domain (RuvB-L)" evidence="1">
    <location>
        <begin position="1"/>
        <end position="181"/>
    </location>
</feature>
<feature type="region of interest" description="Small ATPAse domain (RuvB-S)" evidence="1">
    <location>
        <begin position="182"/>
        <end position="252"/>
    </location>
</feature>
<feature type="region of interest" description="Head domain (RuvB-H)" evidence="1">
    <location>
        <begin position="255"/>
        <end position="338"/>
    </location>
</feature>
<feature type="binding site" evidence="1">
    <location>
        <position position="20"/>
    </location>
    <ligand>
        <name>ATP</name>
        <dbReference type="ChEBI" id="CHEBI:30616"/>
    </ligand>
</feature>
<feature type="binding site" evidence="1">
    <location>
        <position position="21"/>
    </location>
    <ligand>
        <name>ATP</name>
        <dbReference type="ChEBI" id="CHEBI:30616"/>
    </ligand>
</feature>
<feature type="binding site" evidence="1">
    <location>
        <position position="62"/>
    </location>
    <ligand>
        <name>ATP</name>
        <dbReference type="ChEBI" id="CHEBI:30616"/>
    </ligand>
</feature>
<feature type="binding site" evidence="1">
    <location>
        <position position="65"/>
    </location>
    <ligand>
        <name>ATP</name>
        <dbReference type="ChEBI" id="CHEBI:30616"/>
    </ligand>
</feature>
<feature type="binding site" evidence="1">
    <location>
        <position position="66"/>
    </location>
    <ligand>
        <name>ATP</name>
        <dbReference type="ChEBI" id="CHEBI:30616"/>
    </ligand>
</feature>
<feature type="binding site" evidence="1">
    <location>
        <position position="66"/>
    </location>
    <ligand>
        <name>Mg(2+)</name>
        <dbReference type="ChEBI" id="CHEBI:18420"/>
    </ligand>
</feature>
<feature type="binding site" evidence="1">
    <location>
        <position position="67"/>
    </location>
    <ligand>
        <name>ATP</name>
        <dbReference type="ChEBI" id="CHEBI:30616"/>
    </ligand>
</feature>
<feature type="binding site" evidence="1">
    <location>
        <begin position="128"/>
        <end position="130"/>
    </location>
    <ligand>
        <name>ATP</name>
        <dbReference type="ChEBI" id="CHEBI:30616"/>
    </ligand>
</feature>
<feature type="binding site" evidence="1">
    <location>
        <position position="171"/>
    </location>
    <ligand>
        <name>ATP</name>
        <dbReference type="ChEBI" id="CHEBI:30616"/>
    </ligand>
</feature>
<feature type="binding site" evidence="1">
    <location>
        <position position="181"/>
    </location>
    <ligand>
        <name>ATP</name>
        <dbReference type="ChEBI" id="CHEBI:30616"/>
    </ligand>
</feature>
<feature type="binding site" evidence="1">
    <location>
        <position position="218"/>
    </location>
    <ligand>
        <name>ATP</name>
        <dbReference type="ChEBI" id="CHEBI:30616"/>
    </ligand>
</feature>
<feature type="binding site" evidence="1">
    <location>
        <position position="291"/>
    </location>
    <ligand>
        <name>DNA</name>
        <dbReference type="ChEBI" id="CHEBI:16991"/>
    </ligand>
</feature>
<feature type="binding site" evidence="1">
    <location>
        <position position="310"/>
    </location>
    <ligand>
        <name>DNA</name>
        <dbReference type="ChEBI" id="CHEBI:16991"/>
    </ligand>
</feature>
<feature type="binding site" evidence="1">
    <location>
        <position position="315"/>
    </location>
    <ligand>
        <name>DNA</name>
        <dbReference type="ChEBI" id="CHEBI:16991"/>
    </ligand>
</feature>
<name>RUVB_GEOSL</name>
<protein>
    <recommendedName>
        <fullName evidence="1">Holliday junction branch migration complex subunit RuvB</fullName>
        <ecNumber evidence="1">3.6.4.-</ecNumber>
    </recommendedName>
</protein>
<comment type="function">
    <text evidence="1">The RuvA-RuvB-RuvC complex processes Holliday junction (HJ) DNA during genetic recombination and DNA repair, while the RuvA-RuvB complex plays an important role in the rescue of blocked DNA replication forks via replication fork reversal (RFR). RuvA specifically binds to HJ cruciform DNA, conferring on it an open structure. The RuvB hexamer acts as an ATP-dependent pump, pulling dsDNA into and through the RuvAB complex. RuvB forms 2 homohexamers on either side of HJ DNA bound by 1 or 2 RuvA tetramers; 4 subunits per hexamer contact DNA at a time. Coordinated motions by a converter formed by DNA-disengaged RuvB subunits stimulates ATP hydrolysis and nucleotide exchange. Immobilization of the converter enables RuvB to convert the ATP-contained energy into a lever motion, pulling 2 nucleotides of DNA out of the RuvA tetramer per ATP hydrolyzed, thus driving DNA branch migration. The RuvB motors rotate together with the DNA substrate, which together with the progressing nucleotide cycle form the mechanistic basis for DNA recombination by continuous HJ branch migration. Branch migration allows RuvC to scan DNA until it finds its consensus sequence, where it cleaves and resolves cruciform DNA.</text>
</comment>
<comment type="catalytic activity">
    <reaction evidence="1">
        <text>ATP + H2O = ADP + phosphate + H(+)</text>
        <dbReference type="Rhea" id="RHEA:13065"/>
        <dbReference type="ChEBI" id="CHEBI:15377"/>
        <dbReference type="ChEBI" id="CHEBI:15378"/>
        <dbReference type="ChEBI" id="CHEBI:30616"/>
        <dbReference type="ChEBI" id="CHEBI:43474"/>
        <dbReference type="ChEBI" id="CHEBI:456216"/>
    </reaction>
</comment>
<comment type="subunit">
    <text evidence="1">Homohexamer. Forms an RuvA(8)-RuvB(12)-Holliday junction (HJ) complex. HJ DNA is sandwiched between 2 RuvA tetramers; dsDNA enters through RuvA and exits via RuvB. An RuvB hexamer assembles on each DNA strand where it exits the tetramer. Each RuvB hexamer is contacted by two RuvA subunits (via domain III) on 2 adjacent RuvB subunits; this complex drives branch migration. In the full resolvosome a probable DNA-RuvA(4)-RuvB(12)-RuvC(2) complex forms which resolves the HJ.</text>
</comment>
<comment type="subcellular location">
    <subcellularLocation>
        <location evidence="1">Cytoplasm</location>
    </subcellularLocation>
</comment>
<comment type="domain">
    <text evidence="1">Has 3 domains, the large (RuvB-L) and small ATPase (RuvB-S) domains and the C-terminal head (RuvB-H) domain. The head domain binds DNA, while the ATPase domains jointly bind ATP, ADP or are empty depending on the state of the subunit in the translocation cycle. During a single DNA translocation step the structure of each domain remains the same, but their relative positions change.</text>
</comment>
<comment type="similarity">
    <text evidence="1">Belongs to the RuvB family.</text>
</comment>
<evidence type="ECO:0000255" key="1">
    <source>
        <dbReference type="HAMAP-Rule" id="MF_00016"/>
    </source>
</evidence>